<keyword id="KW-0963">Cytoplasm</keyword>
<keyword id="KW-0484">Methanogenesis</keyword>
<keyword id="KW-0808">Transferase</keyword>
<proteinExistence type="inferred from homology"/>
<organism>
    <name type="scientific">Methanothermus fervidus</name>
    <dbReference type="NCBI Taxonomy" id="2180"/>
    <lineage>
        <taxon>Archaea</taxon>
        <taxon>Methanobacteriati</taxon>
        <taxon>Methanobacteriota</taxon>
        <taxon>Methanomada group</taxon>
        <taxon>Methanobacteria</taxon>
        <taxon>Methanobacteriales</taxon>
        <taxon>Methanothermaceae</taxon>
        <taxon>Methanothermus</taxon>
    </lineage>
</organism>
<sequence length="249" mass="28856">MAQFYPGSTKIAENRRKFMNPDAELEKLREISDEDVVRILGHRAPGEEYPSVHPPLEELDEPEDPIKDIVEPTEGAKAGDRVRYVQFTDSVYFAPAQPYIRSRAYLWRYRGADAGTLSGRQIIEARERDVEKIAKELIETEFFDPARTGIRGKSVHGHSLRLDENGMMFDMLRRQVYDEETGRVKMVKNQIGDEFDEPIDLGEPLDEETLKEKTTIYRIDNIPYREDKDLLEIVQRIHQLRSEAGFSPE</sequence>
<name>MCRG_METFE</name>
<feature type="chain" id="PRO_0000147474" description="Methyl-coenzyme M reductase subunit gamma">
    <location>
        <begin position="1"/>
        <end position="249"/>
    </location>
</feature>
<feature type="region of interest" description="Disordered" evidence="2">
    <location>
        <begin position="43"/>
        <end position="62"/>
    </location>
</feature>
<feature type="binding site" evidence="1">
    <location>
        <position position="120"/>
    </location>
    <ligand>
        <name>coenzyme M</name>
        <dbReference type="ChEBI" id="CHEBI:58319"/>
    </ligand>
</feature>
<accession>P12973</accession>
<evidence type="ECO:0000250" key="1">
    <source>
        <dbReference type="UniProtKB" id="P11562"/>
    </source>
</evidence>
<evidence type="ECO:0000256" key="2">
    <source>
        <dbReference type="SAM" id="MobiDB-lite"/>
    </source>
</evidence>
<evidence type="ECO:0000305" key="3"/>
<comment type="function">
    <text evidence="1">Component of the methyl-coenzyme M reductase (MCR) I that catalyzes the reductive cleavage of methyl-coenzyme M (CoM-S-CH3 or 2-(methylthio)ethanesulfonate) using coenzyme B (CoB or 7-mercaptoheptanoylthreonine phosphate) as reductant which results in the production of methane and the mixed heterodisulfide of CoB and CoM (CoM-S-S-CoB). This is the final step in methanogenesis.</text>
</comment>
<comment type="catalytic activity">
    <reaction evidence="1">
        <text>coenzyme B + methyl-coenzyme M = methane + coenzyme M-coenzyme B heterodisulfide</text>
        <dbReference type="Rhea" id="RHEA:12532"/>
        <dbReference type="ChEBI" id="CHEBI:16183"/>
        <dbReference type="ChEBI" id="CHEBI:58286"/>
        <dbReference type="ChEBI" id="CHEBI:58411"/>
        <dbReference type="ChEBI" id="CHEBI:58596"/>
        <dbReference type="EC" id="2.8.4.1"/>
    </reaction>
    <physiologicalReaction direction="left-to-right" evidence="1">
        <dbReference type="Rhea" id="RHEA:12533"/>
    </physiologicalReaction>
</comment>
<comment type="cofactor">
    <cofactor evidence="1">
        <name>coenzyme F430</name>
        <dbReference type="ChEBI" id="CHEBI:60540"/>
    </cofactor>
    <text evidence="1">Binds 2 coenzyme F430 non-covalently per MCR complex. Coenzyme F430 is a yellow nickel porphinoid. Methyl-coenzyme-M reductase is activated when the enzyme-bound coenzyme F430 is reduced to the Ni(I) oxidation state.</text>
</comment>
<comment type="pathway">
    <text evidence="1">One-carbon metabolism; methyl-coenzyme M reduction; methane from methyl-coenzyme M: step 1/1.</text>
</comment>
<comment type="subunit">
    <text evidence="1">MCR is a hexamer of two alpha, two beta, and two gamma chains, forming a dimer of heterotrimers.</text>
</comment>
<comment type="subcellular location">
    <subcellularLocation>
        <location evidence="1">Cytoplasm</location>
    </subcellularLocation>
</comment>
<comment type="similarity">
    <text evidence="3">Belongs to the methyl-coenzyme M reductase gamma subunit family.</text>
</comment>
<gene>
    <name type="primary">mcrG</name>
</gene>
<protein>
    <recommendedName>
        <fullName>Methyl-coenzyme M reductase subunit gamma</fullName>
        <ecNumber evidence="1">2.8.4.1</ecNumber>
    </recommendedName>
    <alternativeName>
        <fullName>Coenzyme-B sulfoethylthiotransferase gamma</fullName>
    </alternativeName>
</protein>
<reference key="1">
    <citation type="journal article" date="1988" name="J. Bacteriol.">
        <title>Structure and comparative analysis of the genes encoding component C of methyl coenzyme M reductase in the extremely thermophilic archaebacterium Methanothermus fervidus.</title>
        <authorList>
            <person name="Weil C.F."/>
            <person name="Cram D.S."/>
            <person name="Sherf B.A."/>
            <person name="Reeve J.N."/>
        </authorList>
    </citation>
    <scope>NUCLEOTIDE SEQUENCE [GENOMIC DNA]</scope>
</reference>
<dbReference type="EC" id="2.8.4.1" evidence="1"/>
<dbReference type="EMBL" id="J03375">
    <property type="protein sequence ID" value="AAA72196.1"/>
    <property type="molecule type" value="Genomic_DNA"/>
</dbReference>
<dbReference type="RefSeq" id="WP_013413862.1">
    <property type="nucleotide sequence ID" value="NC_014658.1"/>
</dbReference>
<dbReference type="SMR" id="P12973"/>
<dbReference type="GeneID" id="9962515"/>
<dbReference type="OMA" id="IMGHRQP"/>
<dbReference type="UniPathway" id="UPA00646">
    <property type="reaction ID" value="UER00699"/>
</dbReference>
<dbReference type="GO" id="GO:0005737">
    <property type="term" value="C:cytoplasm"/>
    <property type="evidence" value="ECO:0007669"/>
    <property type="project" value="UniProtKB-SubCell"/>
</dbReference>
<dbReference type="GO" id="GO:0050524">
    <property type="term" value="F:coenzyme-B sulfoethylthiotransferase activity"/>
    <property type="evidence" value="ECO:0007669"/>
    <property type="project" value="UniProtKB-EC"/>
</dbReference>
<dbReference type="GO" id="GO:0015948">
    <property type="term" value="P:methanogenesis"/>
    <property type="evidence" value="ECO:0007669"/>
    <property type="project" value="UniProtKB-KW"/>
</dbReference>
<dbReference type="CDD" id="cd00539">
    <property type="entry name" value="MCR_gamma"/>
    <property type="match status" value="1"/>
</dbReference>
<dbReference type="Gene3D" id="3.90.320.20">
    <property type="entry name" value="Methyl-coenzyme M reductase, gamma subunit"/>
    <property type="match status" value="1"/>
</dbReference>
<dbReference type="InterPro" id="IPR009024">
    <property type="entry name" value="Me_CoM_Rdtase_Fd-like_fold"/>
</dbReference>
<dbReference type="InterPro" id="IPR003178">
    <property type="entry name" value="Me_CoM_Rdtase_gsu"/>
</dbReference>
<dbReference type="InterPro" id="IPR036994">
    <property type="entry name" value="Me_CoM_Rdtase_gsu_sf"/>
</dbReference>
<dbReference type="NCBIfam" id="TIGR03259">
    <property type="entry name" value="met_CoM_red_gam"/>
    <property type="match status" value="1"/>
</dbReference>
<dbReference type="Pfam" id="PF02240">
    <property type="entry name" value="MCR_gamma"/>
    <property type="match status" value="1"/>
</dbReference>
<dbReference type="PIRSF" id="PIRSF000264">
    <property type="entry name" value="Meth_CoM_rd_gama"/>
    <property type="match status" value="1"/>
</dbReference>
<dbReference type="SUPFAM" id="SSF55088">
    <property type="entry name" value="Methyl-coenzyme M reductase subunits"/>
    <property type="match status" value="1"/>
</dbReference>